<comment type="function">
    <text evidence="1">Receptor that may play a role in the perception of bitterness and is gustducin-linked. May play a role in sensing the chemical composition of the gastrointestinal content. The activity of this receptor may stimulate alpha gustducin, mediate PLC-beta-2 activation and lead to the gating of TRPM5 (By similarity).</text>
</comment>
<comment type="subcellular location">
    <subcellularLocation>
        <location>Membrane</location>
        <topology>Multi-pass membrane protein</topology>
    </subcellularLocation>
</comment>
<comment type="miscellaneous">
    <text>Most taste cells may be activated by a limited number of bitter compounds; individual taste cells can discriminate among bitter stimuli.</text>
</comment>
<comment type="similarity">
    <text evidence="3">Belongs to the G-protein coupled receptor T2R family.</text>
</comment>
<organism>
    <name type="scientific">Pan troglodytes</name>
    <name type="common">Chimpanzee</name>
    <dbReference type="NCBI Taxonomy" id="9598"/>
    <lineage>
        <taxon>Eukaryota</taxon>
        <taxon>Metazoa</taxon>
        <taxon>Chordata</taxon>
        <taxon>Craniata</taxon>
        <taxon>Vertebrata</taxon>
        <taxon>Euteleostomi</taxon>
        <taxon>Mammalia</taxon>
        <taxon>Eutheria</taxon>
        <taxon>Euarchontoglires</taxon>
        <taxon>Primates</taxon>
        <taxon>Haplorrhini</taxon>
        <taxon>Catarrhini</taxon>
        <taxon>Hominidae</taxon>
        <taxon>Pan</taxon>
    </lineage>
</organism>
<accession>Q646B8</accession>
<name>T2R42_PANTR</name>
<sequence length="314" mass="36305">MATELDKIFLILEIAEFIIGMLGNVFIGLVNCSEGIKNQKVFSADFILTCLAISTIGQLFVILFDSFLVGLASHLYTTYRLGKPVIMLWHMTNHLTTWLATCLSIFYFFKIAHFPHSLFLWLRWRMNGMIVMLLILSLFLLIFNSLVLEIFIDISLNIIDKSNLTLYLDESKTVYDKLSILKTLLSLTSFIPFSLSLTSLLFLFLSLVRHTRNLKLSSLGSRDSSTEAHRRAMKMVMSFLFLFIVHFFSLQVANWIFFMLWNNKYIKFAMLALNAFPSCHSFILILGNSKLRQTAVRLLWHLRNYTKTPNPLPL</sequence>
<dbReference type="EMBL" id="AY724879">
    <property type="protein sequence ID" value="AAU21101.1"/>
    <property type="molecule type" value="Genomic_DNA"/>
</dbReference>
<dbReference type="SMR" id="Q646B8"/>
<dbReference type="FunCoup" id="Q646B8">
    <property type="interactions" value="127"/>
</dbReference>
<dbReference type="STRING" id="9598.ENSPTRP00000075248"/>
<dbReference type="GlyCosmos" id="Q646B8">
    <property type="glycosylation" value="1 site, No reported glycans"/>
</dbReference>
<dbReference type="Ensembl" id="ENSPTRT00000008684.5">
    <property type="protein sequence ID" value="ENSPTRP00000075248.1"/>
    <property type="gene ID" value="ENSPTRG00000004696.6"/>
</dbReference>
<dbReference type="VGNC" id="VGNC:57795">
    <property type="gene designation" value="TAS2R42"/>
</dbReference>
<dbReference type="GeneTree" id="ENSGT01100000263477"/>
<dbReference type="InParanoid" id="Q646B8"/>
<dbReference type="OMA" id="YVFPSGH"/>
<dbReference type="Proteomes" id="UP000002277">
    <property type="component" value="Chromosome 12"/>
</dbReference>
<dbReference type="Bgee" id="ENSPTRG00000004696">
    <property type="expression patterns" value="Expressed in fibroblast"/>
</dbReference>
<dbReference type="GO" id="GO:0016020">
    <property type="term" value="C:membrane"/>
    <property type="evidence" value="ECO:0000318"/>
    <property type="project" value="GO_Central"/>
</dbReference>
<dbReference type="GO" id="GO:0005886">
    <property type="term" value="C:plasma membrane"/>
    <property type="evidence" value="ECO:0007669"/>
    <property type="project" value="UniProtKB-ARBA"/>
</dbReference>
<dbReference type="GO" id="GO:0033038">
    <property type="term" value="F:bitter taste receptor activity"/>
    <property type="evidence" value="ECO:0007669"/>
    <property type="project" value="InterPro"/>
</dbReference>
<dbReference type="GO" id="GO:0004930">
    <property type="term" value="F:G protein-coupled receptor activity"/>
    <property type="evidence" value="ECO:0007669"/>
    <property type="project" value="UniProtKB-KW"/>
</dbReference>
<dbReference type="CDD" id="cd15024">
    <property type="entry name" value="7tm_TAS2R42"/>
    <property type="match status" value="1"/>
</dbReference>
<dbReference type="FunFam" id="1.20.1070.10:FF:000042">
    <property type="entry name" value="Taste receptor type 2 member 7"/>
    <property type="match status" value="1"/>
</dbReference>
<dbReference type="Gene3D" id="1.20.1070.10">
    <property type="entry name" value="Rhodopsin 7-helix transmembrane proteins"/>
    <property type="match status" value="1"/>
</dbReference>
<dbReference type="InterPro" id="IPR007960">
    <property type="entry name" value="TAS2R"/>
</dbReference>
<dbReference type="PANTHER" id="PTHR11394">
    <property type="entry name" value="TASTE RECEPTOR TYPE 2"/>
    <property type="match status" value="1"/>
</dbReference>
<dbReference type="PANTHER" id="PTHR11394:SF70">
    <property type="entry name" value="TASTE RECEPTOR TYPE 2 MEMBER 42"/>
    <property type="match status" value="1"/>
</dbReference>
<dbReference type="Pfam" id="PF05296">
    <property type="entry name" value="TAS2R"/>
    <property type="match status" value="1"/>
</dbReference>
<dbReference type="SUPFAM" id="SSF81321">
    <property type="entry name" value="Family A G protein-coupled receptor-like"/>
    <property type="match status" value="1"/>
</dbReference>
<feature type="chain" id="PRO_0000082347" description="Taste receptor type 2 member 42">
    <location>
        <begin position="1"/>
        <end position="314"/>
    </location>
</feature>
<feature type="topological domain" description="Extracellular" evidence="2">
    <location>
        <begin position="1"/>
        <end position="7"/>
    </location>
</feature>
<feature type="transmembrane region" description="Helical; Name=1" evidence="2">
    <location>
        <begin position="8"/>
        <end position="28"/>
    </location>
</feature>
<feature type="topological domain" description="Cytoplasmic" evidence="2">
    <location>
        <begin position="29"/>
        <end position="50"/>
    </location>
</feature>
<feature type="transmembrane region" description="Helical; Name=2" evidence="2">
    <location>
        <begin position="51"/>
        <end position="71"/>
    </location>
</feature>
<feature type="topological domain" description="Extracellular" evidence="2">
    <location>
        <begin position="72"/>
        <end position="101"/>
    </location>
</feature>
<feature type="transmembrane region" description="Helical; Name=4" evidence="2">
    <location>
        <begin position="102"/>
        <end position="122"/>
    </location>
</feature>
<feature type="topological domain" description="Cytoplasmic" evidence="2">
    <location>
        <begin position="123"/>
        <end position="127"/>
    </location>
</feature>
<feature type="transmembrane region" description="Helical; Name=3" evidence="2">
    <location>
        <begin position="128"/>
        <end position="148"/>
    </location>
</feature>
<feature type="topological domain" description="Extracellular" evidence="2">
    <location>
        <begin position="149"/>
        <end position="187"/>
    </location>
</feature>
<feature type="transmembrane region" description="Helical; Name=5" evidence="2">
    <location>
        <begin position="188"/>
        <end position="208"/>
    </location>
</feature>
<feature type="topological domain" description="Cytoplasmic" evidence="2">
    <location>
        <begin position="209"/>
        <end position="238"/>
    </location>
</feature>
<feature type="transmembrane region" description="Helical; Name=6" evidence="2">
    <location>
        <begin position="239"/>
        <end position="259"/>
    </location>
</feature>
<feature type="topological domain" description="Extracellular" evidence="2">
    <location>
        <begin position="260"/>
        <end position="265"/>
    </location>
</feature>
<feature type="transmembrane region" description="Helical; Name=7" evidence="2">
    <location>
        <begin position="266"/>
        <end position="286"/>
    </location>
</feature>
<feature type="topological domain" description="Cytoplasmic" evidence="2">
    <location>
        <begin position="287"/>
        <end position="314"/>
    </location>
</feature>
<feature type="glycosylation site" description="N-linked (GlcNAc...) asparagine" evidence="2">
    <location>
        <position position="163"/>
    </location>
</feature>
<gene>
    <name type="primary">TAS2R42</name>
    <name type="synonym">TAS2R55</name>
</gene>
<reference key="1">
    <citation type="journal article" date="2005" name="Mol. Biol. Evol.">
        <title>Evolution of bitter taste receptors in humans and apes.</title>
        <authorList>
            <person name="Fischer A."/>
            <person name="Gilad Y."/>
            <person name="Man O."/>
            <person name="Paeaebo S."/>
        </authorList>
    </citation>
    <scope>NUCLEOTIDE SEQUENCE [GENOMIC DNA]</scope>
</reference>
<keyword id="KW-0297">G-protein coupled receptor</keyword>
<keyword id="KW-0325">Glycoprotein</keyword>
<keyword id="KW-0472">Membrane</keyword>
<keyword id="KW-0675">Receptor</keyword>
<keyword id="KW-1185">Reference proteome</keyword>
<keyword id="KW-0716">Sensory transduction</keyword>
<keyword id="KW-0919">Taste</keyword>
<keyword id="KW-0807">Transducer</keyword>
<keyword id="KW-0812">Transmembrane</keyword>
<keyword id="KW-1133">Transmembrane helix</keyword>
<evidence type="ECO:0000250" key="1"/>
<evidence type="ECO:0000255" key="2"/>
<evidence type="ECO:0000305" key="3"/>
<protein>
    <recommendedName>
        <fullName>Taste receptor type 2 member 42</fullName>
        <shortName>T2R42</shortName>
    </recommendedName>
    <alternativeName>
        <fullName>T2R55</fullName>
    </alternativeName>
</protein>
<proteinExistence type="inferred from homology"/>